<proteinExistence type="evidence at protein level"/>
<sequence>MVSAAAGWAAPAFAVAAVVIWVVLCSELLRRRRRGAGSGKGDAAAAARLPPGSFGWPVVGETLEFVSCAYSPRPEAFVDKRRKLHGSAVFRSHLFGSATVVTADAEVSRFVLQSDARAFVPWYPRSLTELMGKSSILLINGALQRRVHGLVGAFFKSSHLKSQLTADMRRRLSPALSSFPDSSLLHVQHLAKSVVFEILVRGLIGLEAGEEMQQLKQQFQEFIVGLMSLPIKLPGTRLYRSLQAKKKMARLIQRIIREKRARRAAASPPRDAIDVLIGDGSDELTDELISDNMIDLMIPAEDSVPVLITLAVKFLSECPLALHQLEEENIQLKRRKTDMGETLQWTDYMSLSFTQHVITETLRLGNIIGGIMRKAVRDVEVKGHLIPKGWCVFVYFRSVHLDDTLYDEPYKFNPWRWKEKDMSNGSFTPFGGGQRLCPGLDLARLEASIFLHHLVTSFRWVAEEDHIVNFPTVRLKRGMPIRVTAKEDDD</sequence>
<reference key="1">
    <citation type="journal article" date="2002" name="Nature">
        <title>The genome sequence and structure of rice chromosome 1.</title>
        <authorList>
            <person name="Sasaki T."/>
            <person name="Matsumoto T."/>
            <person name="Yamamoto K."/>
            <person name="Sakata K."/>
            <person name="Baba T."/>
            <person name="Katayose Y."/>
            <person name="Wu J."/>
            <person name="Niimura Y."/>
            <person name="Cheng Z."/>
            <person name="Nagamura Y."/>
            <person name="Antonio B.A."/>
            <person name="Kanamori H."/>
            <person name="Hosokawa S."/>
            <person name="Masukawa M."/>
            <person name="Arikawa K."/>
            <person name="Chiden Y."/>
            <person name="Hayashi M."/>
            <person name="Okamoto M."/>
            <person name="Ando T."/>
            <person name="Aoki H."/>
            <person name="Arita K."/>
            <person name="Hamada M."/>
            <person name="Harada C."/>
            <person name="Hijishita S."/>
            <person name="Honda M."/>
            <person name="Ichikawa Y."/>
            <person name="Idonuma A."/>
            <person name="Iijima M."/>
            <person name="Ikeda M."/>
            <person name="Ikeno M."/>
            <person name="Ito S."/>
            <person name="Ito T."/>
            <person name="Ito Y."/>
            <person name="Ito Y."/>
            <person name="Iwabuchi A."/>
            <person name="Kamiya K."/>
            <person name="Karasawa W."/>
            <person name="Katagiri S."/>
            <person name="Kikuta A."/>
            <person name="Kobayashi N."/>
            <person name="Kono I."/>
            <person name="Machita K."/>
            <person name="Maehara T."/>
            <person name="Mizuno H."/>
            <person name="Mizubayashi T."/>
            <person name="Mukai Y."/>
            <person name="Nagasaki H."/>
            <person name="Nakashima M."/>
            <person name="Nakama Y."/>
            <person name="Nakamichi Y."/>
            <person name="Nakamura M."/>
            <person name="Namiki N."/>
            <person name="Negishi M."/>
            <person name="Ohta I."/>
            <person name="Ono N."/>
            <person name="Saji S."/>
            <person name="Sakai K."/>
            <person name="Shibata M."/>
            <person name="Shimokawa T."/>
            <person name="Shomura A."/>
            <person name="Song J."/>
            <person name="Takazaki Y."/>
            <person name="Terasawa K."/>
            <person name="Tsuji K."/>
            <person name="Waki K."/>
            <person name="Yamagata H."/>
            <person name="Yamane H."/>
            <person name="Yoshiki S."/>
            <person name="Yoshihara R."/>
            <person name="Yukawa K."/>
            <person name="Zhong H."/>
            <person name="Iwama H."/>
            <person name="Endo T."/>
            <person name="Ito H."/>
            <person name="Hahn J.H."/>
            <person name="Kim H.-I."/>
            <person name="Eun M.-Y."/>
            <person name="Yano M."/>
            <person name="Jiang J."/>
            <person name="Gojobori T."/>
        </authorList>
    </citation>
    <scope>NUCLEOTIDE SEQUENCE [LARGE SCALE GENOMIC DNA]</scope>
    <source>
        <strain>cv. Nipponbare</strain>
    </source>
</reference>
<reference key="2">
    <citation type="journal article" date="2005" name="Nature">
        <title>The map-based sequence of the rice genome.</title>
        <authorList>
            <consortium name="International rice genome sequencing project (IRGSP)"/>
        </authorList>
    </citation>
    <scope>NUCLEOTIDE SEQUENCE [LARGE SCALE GENOMIC DNA]</scope>
    <source>
        <strain>cv. Nipponbare</strain>
    </source>
</reference>
<reference key="3">
    <citation type="journal article" date="2008" name="Nucleic Acids Res.">
        <title>The rice annotation project database (RAP-DB): 2008 update.</title>
        <authorList>
            <consortium name="The rice annotation project (RAP)"/>
        </authorList>
    </citation>
    <scope>GENOME REANNOTATION</scope>
    <source>
        <strain>cv. Nipponbare</strain>
    </source>
</reference>
<reference key="4">
    <citation type="journal article" date="2013" name="Rice">
        <title>Improvement of the Oryza sativa Nipponbare reference genome using next generation sequence and optical map data.</title>
        <authorList>
            <person name="Kawahara Y."/>
            <person name="de la Bastide M."/>
            <person name="Hamilton J.P."/>
            <person name="Kanamori H."/>
            <person name="McCombie W.R."/>
            <person name="Ouyang S."/>
            <person name="Schwartz D.C."/>
            <person name="Tanaka T."/>
            <person name="Wu J."/>
            <person name="Zhou S."/>
            <person name="Childs K.L."/>
            <person name="Davidson R.M."/>
            <person name="Lin H."/>
            <person name="Quesada-Ocampo L."/>
            <person name="Vaillancourt B."/>
            <person name="Sakai H."/>
            <person name="Lee S.S."/>
            <person name="Kim J."/>
            <person name="Numa H."/>
            <person name="Itoh T."/>
            <person name="Buell C.R."/>
            <person name="Matsumoto T."/>
        </authorList>
    </citation>
    <scope>GENOME REANNOTATION</scope>
    <source>
        <strain>cv. Nipponbare</strain>
    </source>
</reference>
<reference key="5">
    <citation type="journal article" date="2003" name="Plant Cell">
        <title>A rice brassinosteroid-deficient mutant, ebisu dwarf (d2), is caused by a loss of function of a new member of cytochrome P450.</title>
        <authorList>
            <person name="Hong Z."/>
            <person name="Ueguchi-Tanaka M."/>
            <person name="Umemura K."/>
            <person name="Uozu S."/>
            <person name="Fujioka S."/>
            <person name="Takatsuto S."/>
            <person name="Yoshida S."/>
            <person name="Ashikari M."/>
            <person name="Kitano H."/>
            <person name="Matsuoka M."/>
        </authorList>
    </citation>
    <scope>FUNCTION</scope>
    <scope>CATALYTIC ACTIVITY</scope>
    <scope>PATHWAY</scope>
    <scope>TISSUE SPECIFICITY</scope>
    <scope>INDUCTION</scope>
    <scope>MUTAGENESIS OF PRO-305</scope>
    <scope>DISRUPTION PHENOTYPE</scope>
</reference>
<name>C90D2_ORYSJ</name>
<organism>
    <name type="scientific">Oryza sativa subsp. japonica</name>
    <name type="common">Rice</name>
    <dbReference type="NCBI Taxonomy" id="39947"/>
    <lineage>
        <taxon>Eukaryota</taxon>
        <taxon>Viridiplantae</taxon>
        <taxon>Streptophyta</taxon>
        <taxon>Embryophyta</taxon>
        <taxon>Tracheophyta</taxon>
        <taxon>Spermatophyta</taxon>
        <taxon>Magnoliopsida</taxon>
        <taxon>Liliopsida</taxon>
        <taxon>Poales</taxon>
        <taxon>Poaceae</taxon>
        <taxon>BOP clade</taxon>
        <taxon>Oryzoideae</taxon>
        <taxon>Oryzeae</taxon>
        <taxon>Oryzinae</taxon>
        <taxon>Oryza</taxon>
        <taxon>Oryza sativa</taxon>
    </lineage>
</organism>
<comment type="function">
    <text evidence="3">Catalyzes the C6-oxidation step in brassinosteroids biosynthesis (PubMed:14615594). May convert 6-deoxoteasterone (6-deoxoTE) to 3-dehydro-6-deoxoteasterone (6-deoxo3DT, 6-deoxo3DHT), and teasterone (TE) to 3-dehydroteasterone (3DT, 3-DHT) (PubMed:14615594). Involved in the elongation of leaf sheaths and stems (PubMed:14615594).</text>
</comment>
<comment type="catalytic activity">
    <reaction evidence="3">
        <text>6-deoxoteasterone + reduced [NADPH--hemoprotein reductase] + O2 = 3-dehydro-6-deoxoteasterone + oxidized [NADPH--hemoprotein reductase] + 2 H2O + H(+)</text>
        <dbReference type="Rhea" id="RHEA:69983"/>
        <dbReference type="Rhea" id="RHEA-COMP:11964"/>
        <dbReference type="Rhea" id="RHEA-COMP:11965"/>
        <dbReference type="ChEBI" id="CHEBI:15377"/>
        <dbReference type="ChEBI" id="CHEBI:15378"/>
        <dbReference type="ChEBI" id="CHEBI:15379"/>
        <dbReference type="ChEBI" id="CHEBI:20710"/>
        <dbReference type="ChEBI" id="CHEBI:20716"/>
        <dbReference type="ChEBI" id="CHEBI:57618"/>
        <dbReference type="ChEBI" id="CHEBI:58210"/>
    </reaction>
    <physiologicalReaction direction="left-to-right" evidence="3">
        <dbReference type="Rhea" id="RHEA:69984"/>
    </physiologicalReaction>
</comment>
<comment type="cofactor">
    <cofactor evidence="1">
        <name>heme</name>
        <dbReference type="ChEBI" id="CHEBI:30413"/>
    </cofactor>
</comment>
<comment type="pathway">
    <text evidence="3">Plant hormone biosynthesis; brassinosteroid biosynthesis.</text>
</comment>
<comment type="subcellular location">
    <subcellularLocation>
        <location evidence="2">Membrane</location>
        <topology evidence="2">Single-pass membrane protein</topology>
    </subcellularLocation>
</comment>
<comment type="tissue specificity">
    <text evidence="3">Expressed at low levels leaf blades, shoot apex and elongating stem.</text>
</comment>
<comment type="induction">
    <text evidence="3">Down-regulated by brassinolide (BL) in ebisu dwarf (d2) mutant.</text>
</comment>
<comment type="disruption phenotype">
    <text evidence="3">Plants show abnormalities in growth: inhibition of second internode elongation, shortened leaf sheaths, erect leaves, and deficiency in skotomorphogenesis. Treatment with exogenous brassinolide (BL) rescues the abnormal phenotype.</text>
</comment>
<comment type="similarity">
    <text evidence="5">Belongs to the cytochrome P450 family.</text>
</comment>
<gene>
    <name evidence="4" type="primary">CYP90D2</name>
    <name evidence="4" type="synonym">D2</name>
    <name evidence="5" type="ordered locus">Os01g0197100</name>
    <name evidence="5" type="ordered locus">LOC_Os01g10040</name>
    <name evidence="6" type="ORF">P0419B01.11</name>
</gene>
<protein>
    <recommendedName>
        <fullName evidence="4">Cytochrome P450 90D2</fullName>
        <shortName evidence="4">OsCYP90D2</shortName>
    </recommendedName>
    <alternativeName>
        <fullName evidence="4">3-dehydro-6-deoxoteasterone synthase</fullName>
        <ecNumber evidence="3">1.14.19.-</ecNumber>
    </alternativeName>
    <alternativeName>
        <fullName evidence="4">3-dehydroteasterone synthase</fullName>
        <ecNumber evidence="3">1.14.19.-</ecNumber>
    </alternativeName>
    <alternativeName>
        <fullName evidence="4">C6-oxidase</fullName>
    </alternativeName>
</protein>
<evidence type="ECO:0000250" key="1">
    <source>
        <dbReference type="UniProtKB" id="P04798"/>
    </source>
</evidence>
<evidence type="ECO:0000255" key="2"/>
<evidence type="ECO:0000269" key="3">
    <source>
    </source>
</evidence>
<evidence type="ECO:0000303" key="4">
    <source>
    </source>
</evidence>
<evidence type="ECO:0000305" key="5"/>
<evidence type="ECO:0000312" key="6">
    <source>
        <dbReference type="EMBL" id="BAS70868.1"/>
    </source>
</evidence>
<accession>Q94IW5</accession>
<accession>Q0JPW7</accession>
<dbReference type="EC" id="1.14.19.-" evidence="3"/>
<dbReference type="EMBL" id="AP003244">
    <property type="protein sequence ID" value="BAB56089.1"/>
    <property type="molecule type" value="Genomic_DNA"/>
</dbReference>
<dbReference type="EMBL" id="AP008207">
    <property type="protein sequence ID" value="BAF04211.1"/>
    <property type="molecule type" value="Genomic_DNA"/>
</dbReference>
<dbReference type="EMBL" id="AP014957">
    <property type="protein sequence ID" value="BAS70868.1"/>
    <property type="molecule type" value="Genomic_DNA"/>
</dbReference>
<dbReference type="RefSeq" id="XP_015611433.1">
    <property type="nucleotide sequence ID" value="XM_015755947.1"/>
</dbReference>
<dbReference type="SMR" id="Q94IW5"/>
<dbReference type="FunCoup" id="Q94IW5">
    <property type="interactions" value="405"/>
</dbReference>
<dbReference type="STRING" id="39947.Q94IW5"/>
<dbReference type="PaxDb" id="39947-Q94IW5"/>
<dbReference type="EnsemblPlants" id="Os01t0197100-01">
    <property type="protein sequence ID" value="Os01t0197100-01"/>
    <property type="gene ID" value="Os01g0197100"/>
</dbReference>
<dbReference type="Gramene" id="Os01t0197100-01">
    <property type="protein sequence ID" value="Os01t0197100-01"/>
    <property type="gene ID" value="Os01g0197100"/>
</dbReference>
<dbReference type="KEGG" id="dosa:Os01g0197100"/>
<dbReference type="eggNOG" id="KOG0157">
    <property type="taxonomic scope" value="Eukaryota"/>
</dbReference>
<dbReference type="HOGENOM" id="CLU_001570_15_5_1"/>
<dbReference type="InParanoid" id="Q94IW5"/>
<dbReference type="OMA" id="MKRRMPV"/>
<dbReference type="OrthoDB" id="3945418at2759"/>
<dbReference type="PlantReactome" id="R-OSA-1119456">
    <property type="pathway name" value="Brassinosteroid biosynthesis II"/>
</dbReference>
<dbReference type="UniPathway" id="UPA00381"/>
<dbReference type="Proteomes" id="UP000000763">
    <property type="component" value="Chromosome 1"/>
</dbReference>
<dbReference type="Proteomes" id="UP000059680">
    <property type="component" value="Chromosome 1"/>
</dbReference>
<dbReference type="ExpressionAtlas" id="Q94IW5">
    <property type="expression patterns" value="baseline and differential"/>
</dbReference>
<dbReference type="GO" id="GO:0016020">
    <property type="term" value="C:membrane"/>
    <property type="evidence" value="ECO:0007669"/>
    <property type="project" value="UniProtKB-SubCell"/>
</dbReference>
<dbReference type="GO" id="GO:0020037">
    <property type="term" value="F:heme binding"/>
    <property type="evidence" value="ECO:0007669"/>
    <property type="project" value="InterPro"/>
</dbReference>
<dbReference type="GO" id="GO:0005506">
    <property type="term" value="F:iron ion binding"/>
    <property type="evidence" value="ECO:0007669"/>
    <property type="project" value="InterPro"/>
</dbReference>
<dbReference type="GO" id="GO:0016709">
    <property type="term" value="F:oxidoreductase activity, acting on paired donors, with incorporation or reduction of molecular oxygen, NAD(P)H as one donor, and incorporation of one atom of oxygen"/>
    <property type="evidence" value="ECO:0000318"/>
    <property type="project" value="GO_Central"/>
</dbReference>
<dbReference type="GO" id="GO:0016132">
    <property type="term" value="P:brassinosteroid biosynthetic process"/>
    <property type="evidence" value="ECO:0000318"/>
    <property type="project" value="GO_Central"/>
</dbReference>
<dbReference type="GO" id="GO:0010268">
    <property type="term" value="P:brassinosteroid homeostasis"/>
    <property type="evidence" value="ECO:0000318"/>
    <property type="project" value="GO_Central"/>
</dbReference>
<dbReference type="CDD" id="cd11043">
    <property type="entry name" value="CYP90-like"/>
    <property type="match status" value="1"/>
</dbReference>
<dbReference type="FunFam" id="1.10.630.10:FF:000048">
    <property type="entry name" value="3-epi-6-deoxocathasterone 23-monooxygenase CYP90D1"/>
    <property type="match status" value="1"/>
</dbReference>
<dbReference type="Gene3D" id="1.10.630.10">
    <property type="entry name" value="Cytochrome P450"/>
    <property type="match status" value="1"/>
</dbReference>
<dbReference type="InterPro" id="IPR001128">
    <property type="entry name" value="Cyt_P450"/>
</dbReference>
<dbReference type="InterPro" id="IPR017972">
    <property type="entry name" value="Cyt_P450_CS"/>
</dbReference>
<dbReference type="InterPro" id="IPR002401">
    <property type="entry name" value="Cyt_P450_E_grp-I"/>
</dbReference>
<dbReference type="InterPro" id="IPR036396">
    <property type="entry name" value="Cyt_P450_sf"/>
</dbReference>
<dbReference type="PANTHER" id="PTHR24286:SF30">
    <property type="entry name" value="3-EPI-6-DEOXOCATHASTERONE 23-MONOOXYGENASE CYP90D1"/>
    <property type="match status" value="1"/>
</dbReference>
<dbReference type="PANTHER" id="PTHR24286">
    <property type="entry name" value="CYTOCHROME P450 26"/>
    <property type="match status" value="1"/>
</dbReference>
<dbReference type="Pfam" id="PF00067">
    <property type="entry name" value="p450"/>
    <property type="match status" value="1"/>
</dbReference>
<dbReference type="PRINTS" id="PR00463">
    <property type="entry name" value="EP450I"/>
</dbReference>
<dbReference type="SUPFAM" id="SSF48264">
    <property type="entry name" value="Cytochrome P450"/>
    <property type="match status" value="1"/>
</dbReference>
<dbReference type="PROSITE" id="PS00086">
    <property type="entry name" value="CYTOCHROME_P450"/>
    <property type="match status" value="1"/>
</dbReference>
<feature type="chain" id="PRO_0000052187" description="Cytochrome P450 90D2">
    <location>
        <begin position="1"/>
        <end position="490"/>
    </location>
</feature>
<feature type="transmembrane region" description="Helical" evidence="2">
    <location>
        <begin position="4"/>
        <end position="24"/>
    </location>
</feature>
<feature type="binding site" description="axial binding residue" evidence="1">
    <location>
        <position position="437"/>
    </location>
    <ligand>
        <name>heme</name>
        <dbReference type="ChEBI" id="CHEBI:30413"/>
    </ligand>
    <ligandPart>
        <name>Fe</name>
        <dbReference type="ChEBI" id="CHEBI:18248"/>
    </ligandPart>
</feature>
<feature type="mutagenesis site" description="In d2-2; dwarf and defective in brassinosteroid biosynthesis." evidence="3">
    <original>P</original>
    <variation>S</variation>
    <location>
        <position position="305"/>
    </location>
</feature>
<keyword id="KW-1069">Brassinosteroid biosynthesis</keyword>
<keyword id="KW-0349">Heme</keyword>
<keyword id="KW-0408">Iron</keyword>
<keyword id="KW-0444">Lipid biosynthesis</keyword>
<keyword id="KW-0443">Lipid metabolism</keyword>
<keyword id="KW-0472">Membrane</keyword>
<keyword id="KW-0479">Metal-binding</keyword>
<keyword id="KW-0503">Monooxygenase</keyword>
<keyword id="KW-0560">Oxidoreductase</keyword>
<keyword id="KW-1185">Reference proteome</keyword>
<keyword id="KW-0752">Steroid biosynthesis</keyword>
<keyword id="KW-0812">Transmembrane</keyword>
<keyword id="KW-1133">Transmembrane helix</keyword>